<gene>
    <name type="primary">polr1d</name>
    <name type="ORF">zgc:136449</name>
</gene>
<sequence length="112" mass="12755">MAELGQKHALEMVRTDGADEGCVTFVLNEEDHTLGNSLRYMIMKSQDVEFCGYSITHPSESKINFRIQTRDGVPASEPLRNGLNNLTDVCKHVLQTFEARMKEFKEQEESMT</sequence>
<proteinExistence type="inferred from homology"/>
<accession>Q6DRI4</accession>
<accession>A4FUL5</accession>
<feature type="chain" id="PRO_0000232450" description="DNA-directed RNA polymerases I and III subunit RPAC2">
    <location>
        <begin position="1"/>
        <end position="112"/>
    </location>
</feature>
<reference key="1">
    <citation type="journal article" date="2004" name="Proc. Natl. Acad. Sci. U.S.A.">
        <title>Identification of 315 genes essential for early zebrafish development.</title>
        <authorList>
            <person name="Amsterdam A."/>
            <person name="Nissen R.M."/>
            <person name="Sun Z."/>
            <person name="Swindell E.C."/>
            <person name="Farrington S."/>
            <person name="Hopkins N."/>
        </authorList>
    </citation>
    <scope>NUCLEOTIDE SEQUENCE [LARGE SCALE MRNA]</scope>
</reference>
<reference key="2">
    <citation type="submission" date="2006-04" db="EMBL/GenBank/DDBJ databases">
        <authorList>
            <consortium name="NIH - Zebrafish Gene Collection (ZGC) project"/>
        </authorList>
    </citation>
    <scope>NUCLEOTIDE SEQUENCE [LARGE SCALE MRNA]</scope>
    <source>
        <tissue>Larval eye</tissue>
    </source>
</reference>
<comment type="function">
    <text evidence="1">DNA-dependent RNA polymerase catalyzes the transcription of DNA into RNA using the four ribonucleoside triphosphates as substrates. Common core component of RNA polymerases I and III which synthesize ribosomal RNA precursors and small RNAs, such as 5S rRNA and tRNAs, respectively (By similarity).</text>
</comment>
<comment type="subunit">
    <text evidence="1">Component of the RNA polymerase I (Pol I) and RNA polymerase III (Pol III) complexes consisting of at least 13 and 17 subunits, respectively.</text>
</comment>
<comment type="subcellular location">
    <subcellularLocation>
        <location evidence="1">Nucleus</location>
    </subcellularLocation>
</comment>
<comment type="similarity">
    <text evidence="2">Belongs to the archaeal Rpo11/eukaryotic RPB11/RPC19 RNA polymerase subunit family.</text>
</comment>
<organism>
    <name type="scientific">Danio rerio</name>
    <name type="common">Zebrafish</name>
    <name type="synonym">Brachydanio rerio</name>
    <dbReference type="NCBI Taxonomy" id="7955"/>
    <lineage>
        <taxon>Eukaryota</taxon>
        <taxon>Metazoa</taxon>
        <taxon>Chordata</taxon>
        <taxon>Craniata</taxon>
        <taxon>Vertebrata</taxon>
        <taxon>Euteleostomi</taxon>
        <taxon>Actinopterygii</taxon>
        <taxon>Neopterygii</taxon>
        <taxon>Teleostei</taxon>
        <taxon>Ostariophysi</taxon>
        <taxon>Cypriniformes</taxon>
        <taxon>Danionidae</taxon>
        <taxon>Danioninae</taxon>
        <taxon>Danio</taxon>
    </lineage>
</organism>
<keyword id="KW-0240">DNA-directed RNA polymerase</keyword>
<keyword id="KW-0539">Nucleus</keyword>
<keyword id="KW-1185">Reference proteome</keyword>
<keyword id="KW-0804">Transcription</keyword>
<name>RPAC2_DANRE</name>
<evidence type="ECO:0000250" key="1"/>
<evidence type="ECO:0000305" key="2"/>
<dbReference type="EMBL" id="AY648775">
    <property type="protein sequence ID" value="AAT68093.1"/>
    <property type="molecule type" value="mRNA"/>
</dbReference>
<dbReference type="EMBL" id="BC115138">
    <property type="protein sequence ID" value="AAI15139.1"/>
    <property type="molecule type" value="mRNA"/>
</dbReference>
<dbReference type="RefSeq" id="NP_001003888.1">
    <property type="nucleotide sequence ID" value="NM_001003888.1"/>
</dbReference>
<dbReference type="SMR" id="Q6DRI4"/>
<dbReference type="FunCoup" id="Q6DRI4">
    <property type="interactions" value="1523"/>
</dbReference>
<dbReference type="STRING" id="7955.ENSDARP00000054709"/>
<dbReference type="PaxDb" id="7955-ENSDARP00000054709"/>
<dbReference type="Ensembl" id="ENSDART00000054710">
    <property type="protein sequence ID" value="ENSDARP00000054709"/>
    <property type="gene ID" value="ENSDARG00000037570"/>
</dbReference>
<dbReference type="GeneID" id="445412"/>
<dbReference type="KEGG" id="dre:445412"/>
<dbReference type="AGR" id="ZFIN:ZDB-GENE-040930-4"/>
<dbReference type="CTD" id="51082"/>
<dbReference type="ZFIN" id="ZDB-GENE-040930-4">
    <property type="gene designation" value="polr1d"/>
</dbReference>
<dbReference type="eggNOG" id="KOG3438">
    <property type="taxonomic scope" value="Eukaryota"/>
</dbReference>
<dbReference type="HOGENOM" id="CLU_090381_4_2_1"/>
<dbReference type="InParanoid" id="Q6DRI4"/>
<dbReference type="OMA" id="MRIQMYD"/>
<dbReference type="OrthoDB" id="510325at2759"/>
<dbReference type="PhylomeDB" id="Q6DRI4"/>
<dbReference type="TreeFam" id="TF103035"/>
<dbReference type="PRO" id="PR:Q6DRI4"/>
<dbReference type="Proteomes" id="UP000000437">
    <property type="component" value="Alternate scaffold 14"/>
</dbReference>
<dbReference type="Proteomes" id="UP000000437">
    <property type="component" value="Chromosome 14"/>
</dbReference>
<dbReference type="Bgee" id="ENSDARG00000037570">
    <property type="expression patterns" value="Expressed in early embryo and 27 other cell types or tissues"/>
</dbReference>
<dbReference type="GO" id="GO:0005736">
    <property type="term" value="C:RNA polymerase I complex"/>
    <property type="evidence" value="ECO:0000318"/>
    <property type="project" value="GO_Central"/>
</dbReference>
<dbReference type="GO" id="GO:0005666">
    <property type="term" value="C:RNA polymerase III complex"/>
    <property type="evidence" value="ECO:0000318"/>
    <property type="project" value="GO_Central"/>
</dbReference>
<dbReference type="GO" id="GO:0003677">
    <property type="term" value="F:DNA binding"/>
    <property type="evidence" value="ECO:0007669"/>
    <property type="project" value="InterPro"/>
</dbReference>
<dbReference type="GO" id="GO:0003899">
    <property type="term" value="F:DNA-directed RNA polymerase activity"/>
    <property type="evidence" value="ECO:0007669"/>
    <property type="project" value="InterPro"/>
</dbReference>
<dbReference type="GO" id="GO:0046983">
    <property type="term" value="F:protein dimerization activity"/>
    <property type="evidence" value="ECO:0007669"/>
    <property type="project" value="InterPro"/>
</dbReference>
<dbReference type="GO" id="GO:0051216">
    <property type="term" value="P:cartilage development"/>
    <property type="evidence" value="ECO:0000315"/>
    <property type="project" value="ZFIN"/>
</dbReference>
<dbReference type="GO" id="GO:1904888">
    <property type="term" value="P:cranial skeletal system development"/>
    <property type="evidence" value="ECO:0000315"/>
    <property type="project" value="ZFIN"/>
</dbReference>
<dbReference type="GO" id="GO:0048703">
    <property type="term" value="P:embryonic viscerocranium morphogenesis"/>
    <property type="evidence" value="ECO:0000315"/>
    <property type="project" value="ZFIN"/>
</dbReference>
<dbReference type="GO" id="GO:0042254">
    <property type="term" value="P:ribosome biogenesis"/>
    <property type="evidence" value="ECO:0000315"/>
    <property type="project" value="ZFIN"/>
</dbReference>
<dbReference type="GO" id="GO:0006383">
    <property type="term" value="P:transcription by RNA polymerase III"/>
    <property type="evidence" value="ECO:0000318"/>
    <property type="project" value="GO_Central"/>
</dbReference>
<dbReference type="GO" id="GO:0006362">
    <property type="term" value="P:transcription elongation by RNA polymerase I"/>
    <property type="evidence" value="ECO:0000318"/>
    <property type="project" value="GO_Central"/>
</dbReference>
<dbReference type="CDD" id="cd07029">
    <property type="entry name" value="RNAP_I_III_AC19"/>
    <property type="match status" value="1"/>
</dbReference>
<dbReference type="FunFam" id="3.30.1360.10:FF:000006">
    <property type="entry name" value="DNA-directed RNA polymerases I and III subunit RPAC2"/>
    <property type="match status" value="1"/>
</dbReference>
<dbReference type="Gene3D" id="3.30.1360.10">
    <property type="entry name" value="RNA polymerase, RBP11-like subunit"/>
    <property type="match status" value="1"/>
</dbReference>
<dbReference type="HAMAP" id="MF_00261">
    <property type="entry name" value="RNApol_arch_Rpo11"/>
    <property type="match status" value="1"/>
</dbReference>
<dbReference type="InterPro" id="IPR036603">
    <property type="entry name" value="RBP11-like"/>
</dbReference>
<dbReference type="InterPro" id="IPR009025">
    <property type="entry name" value="RBP11-like_dimer"/>
</dbReference>
<dbReference type="InterPro" id="IPR008193">
    <property type="entry name" value="RNA_pol_Rpb11_13-16kDa_CS"/>
</dbReference>
<dbReference type="InterPro" id="IPR033898">
    <property type="entry name" value="RNAP_AC19"/>
</dbReference>
<dbReference type="InterPro" id="IPR022905">
    <property type="entry name" value="Rpo11-like"/>
</dbReference>
<dbReference type="PANTHER" id="PTHR13946">
    <property type="entry name" value="DNA-DIRECTED RNA POLYMERASE I,II,III"/>
    <property type="match status" value="1"/>
</dbReference>
<dbReference type="PANTHER" id="PTHR13946:SF28">
    <property type="entry name" value="DNA-DIRECTED RNA POLYMERASES I AND III SUBUNIT RPAC2"/>
    <property type="match status" value="1"/>
</dbReference>
<dbReference type="Pfam" id="PF13656">
    <property type="entry name" value="RNA_pol_L_2"/>
    <property type="match status" value="1"/>
</dbReference>
<dbReference type="SUPFAM" id="SSF55257">
    <property type="entry name" value="RBP11-like subunits of RNA polymerase"/>
    <property type="match status" value="1"/>
</dbReference>
<dbReference type="PROSITE" id="PS01154">
    <property type="entry name" value="RNA_POL_L_13KD"/>
    <property type="match status" value="1"/>
</dbReference>
<protein>
    <recommendedName>
        <fullName>DNA-directed RNA polymerases I and III subunit RPAC2</fullName>
        <shortName>RNA polymerases I and III subunit AC2</shortName>
    </recommendedName>
    <alternativeName>
        <fullName>AC19</fullName>
    </alternativeName>
    <alternativeName>
        <fullName>DNA-directed RNA polymerase I subunit D</fullName>
    </alternativeName>
</protein>